<dbReference type="EC" id="2.7.7.9"/>
<dbReference type="EMBL" id="CP000046">
    <property type="protein sequence ID" value="AAW37287.1"/>
    <property type="molecule type" value="Genomic_DNA"/>
</dbReference>
<dbReference type="RefSeq" id="WP_000721336.1">
    <property type="nucleotide sequence ID" value="NZ_JBGOFO010000001.1"/>
</dbReference>
<dbReference type="SMR" id="Q5HD54"/>
<dbReference type="KEGG" id="sac:SACOL2508"/>
<dbReference type="HOGENOM" id="CLU_029499_1_2_9"/>
<dbReference type="UniPathway" id="UPA00894"/>
<dbReference type="Proteomes" id="UP000000530">
    <property type="component" value="Chromosome"/>
</dbReference>
<dbReference type="GO" id="GO:0003983">
    <property type="term" value="F:UTP:glucose-1-phosphate uridylyltransferase activity"/>
    <property type="evidence" value="ECO:0007669"/>
    <property type="project" value="UniProtKB-EC"/>
</dbReference>
<dbReference type="GO" id="GO:0009246">
    <property type="term" value="P:enterobacterial common antigen biosynthetic process"/>
    <property type="evidence" value="ECO:0007669"/>
    <property type="project" value="UniProtKB-UniPathway"/>
</dbReference>
<dbReference type="GO" id="GO:0006011">
    <property type="term" value="P:UDP-alpha-D-glucose metabolic process"/>
    <property type="evidence" value="ECO:0007669"/>
    <property type="project" value="InterPro"/>
</dbReference>
<dbReference type="CDD" id="cd02541">
    <property type="entry name" value="UGPase_prokaryotic"/>
    <property type="match status" value="1"/>
</dbReference>
<dbReference type="Gene3D" id="3.90.550.10">
    <property type="entry name" value="Spore Coat Polysaccharide Biosynthesis Protein SpsA, Chain A"/>
    <property type="match status" value="1"/>
</dbReference>
<dbReference type="InterPro" id="IPR005771">
    <property type="entry name" value="GalU_uridylyltTrfase_bac/arc"/>
</dbReference>
<dbReference type="InterPro" id="IPR005835">
    <property type="entry name" value="NTP_transferase_dom"/>
</dbReference>
<dbReference type="InterPro" id="IPR029044">
    <property type="entry name" value="Nucleotide-diphossugar_trans"/>
</dbReference>
<dbReference type="NCBIfam" id="TIGR01099">
    <property type="entry name" value="galU"/>
    <property type="match status" value="1"/>
</dbReference>
<dbReference type="PANTHER" id="PTHR43197">
    <property type="entry name" value="UTP--GLUCOSE-1-PHOSPHATE URIDYLYLTRANSFERASE"/>
    <property type="match status" value="1"/>
</dbReference>
<dbReference type="PANTHER" id="PTHR43197:SF1">
    <property type="entry name" value="UTP--GLUCOSE-1-PHOSPHATE URIDYLYLTRANSFERASE"/>
    <property type="match status" value="1"/>
</dbReference>
<dbReference type="Pfam" id="PF00483">
    <property type="entry name" value="NTP_transferase"/>
    <property type="match status" value="1"/>
</dbReference>
<dbReference type="SUPFAM" id="SSF53448">
    <property type="entry name" value="Nucleotide-diphospho-sugar transferases"/>
    <property type="match status" value="1"/>
</dbReference>
<evidence type="ECO:0000250" key="1"/>
<evidence type="ECO:0000305" key="2"/>
<proteinExistence type="inferred from homology"/>
<name>GTAB_STAAC</name>
<comment type="function">
    <text evidence="1">Catalyzes the formation of UDP-glucose from glucose-1-phosphate and UTP. This is an intermediate step in the biosynthesis of diglucosyl-diacylglycerol (Glc2-DAG), i.e. the predominant glycolipid found in the S.aureus membrane, which is also used as a membrane anchor for lipoteichoic acid (LTA) (By similarity).</text>
</comment>
<comment type="catalytic activity">
    <reaction>
        <text>alpha-D-glucose 1-phosphate + UTP + H(+) = UDP-alpha-D-glucose + diphosphate</text>
        <dbReference type="Rhea" id="RHEA:19889"/>
        <dbReference type="ChEBI" id="CHEBI:15378"/>
        <dbReference type="ChEBI" id="CHEBI:33019"/>
        <dbReference type="ChEBI" id="CHEBI:46398"/>
        <dbReference type="ChEBI" id="CHEBI:58601"/>
        <dbReference type="ChEBI" id="CHEBI:58885"/>
        <dbReference type="EC" id="2.7.7.9"/>
    </reaction>
</comment>
<comment type="pathway">
    <text>Glycolipid metabolism; diglucosyl-diacylglycerol biosynthesis.</text>
</comment>
<comment type="similarity">
    <text evidence="2">Belongs to the UDPGP type 2 family.</text>
</comment>
<organism>
    <name type="scientific">Staphylococcus aureus (strain COL)</name>
    <dbReference type="NCBI Taxonomy" id="93062"/>
    <lineage>
        <taxon>Bacteria</taxon>
        <taxon>Bacillati</taxon>
        <taxon>Bacillota</taxon>
        <taxon>Bacilli</taxon>
        <taxon>Bacillales</taxon>
        <taxon>Staphylococcaceae</taxon>
        <taxon>Staphylococcus</taxon>
    </lineage>
</organism>
<feature type="chain" id="PRO_0000308304" description="UTP--glucose-1-phosphate uridylyltransferase">
    <location>
        <begin position="1"/>
        <end position="288"/>
    </location>
</feature>
<sequence length="288" mass="32451">MKKIKKAIIPAAGLGTRFLPATKAMPKEMLPILDKPTIQYIVEEAARAGIEDIIIVTGRHKRAIEDHFDSQKELEMVLKEKGKSELLEKVQYSTELANIFYVRQKEQKGLGHAISSARQFIGNEPFAVLLGDDIVESEVPAVKQLIDVYEETGHSVIGVQEVPEADTHRYGIIDPLTKNGRQYEVKKFVEKPAQGTAPSNLAIMGRYVLTPEIFDYLKTQKEGAGNEIQLTDAIERMNNDNQVYAYDFEGERYDVGEKLGFVKTTIEYALKDDSMREELTRFIKALGL</sequence>
<protein>
    <recommendedName>
        <fullName>UTP--glucose-1-phosphate uridylyltransferase</fullName>
        <ecNumber>2.7.7.9</ecNumber>
    </recommendedName>
    <alternativeName>
        <fullName>Alpha-D-glucosyl-1-phosphate uridylyltransferase</fullName>
    </alternativeName>
    <alternativeName>
        <fullName>UDP-glucose pyrophosphorylase</fullName>
        <shortName>UDPGP</shortName>
    </alternativeName>
    <alternativeName>
        <fullName>Uridine diphosphoglucose pyrophosphorylase</fullName>
    </alternativeName>
</protein>
<gene>
    <name type="primary">gtaB</name>
    <name type="synonym">galU</name>
    <name type="ordered locus">SACOL2508</name>
</gene>
<accession>Q5HD54</accession>
<reference key="1">
    <citation type="journal article" date="2005" name="J. Bacteriol.">
        <title>Insights on evolution of virulence and resistance from the complete genome analysis of an early methicillin-resistant Staphylococcus aureus strain and a biofilm-producing methicillin-resistant Staphylococcus epidermidis strain.</title>
        <authorList>
            <person name="Gill S.R."/>
            <person name="Fouts D.E."/>
            <person name="Archer G.L."/>
            <person name="Mongodin E.F."/>
            <person name="DeBoy R.T."/>
            <person name="Ravel J."/>
            <person name="Paulsen I.T."/>
            <person name="Kolonay J.F."/>
            <person name="Brinkac L.M."/>
            <person name="Beanan M.J."/>
            <person name="Dodson R.J."/>
            <person name="Daugherty S.C."/>
            <person name="Madupu R."/>
            <person name="Angiuoli S.V."/>
            <person name="Durkin A.S."/>
            <person name="Haft D.H."/>
            <person name="Vamathevan J.J."/>
            <person name="Khouri H."/>
            <person name="Utterback T.R."/>
            <person name="Lee C."/>
            <person name="Dimitrov G."/>
            <person name="Jiang L."/>
            <person name="Qin H."/>
            <person name="Weidman J."/>
            <person name="Tran K."/>
            <person name="Kang K.H."/>
            <person name="Hance I.R."/>
            <person name="Nelson K.E."/>
            <person name="Fraser C.M."/>
        </authorList>
    </citation>
    <scope>NUCLEOTIDE SEQUENCE [LARGE SCALE GENOMIC DNA]</scope>
    <source>
        <strain>COL</strain>
    </source>
</reference>
<keyword id="KW-0119">Carbohydrate metabolism</keyword>
<keyword id="KW-0548">Nucleotidyltransferase</keyword>
<keyword id="KW-0808">Transferase</keyword>